<reference key="1">
    <citation type="journal article" date="2003" name="Nucleic Acids Res.">
        <title>The complete genome sequence and analysis of Corynebacterium diphtheriae NCTC13129.</title>
        <authorList>
            <person name="Cerdeno-Tarraga A.-M."/>
            <person name="Efstratiou A."/>
            <person name="Dover L.G."/>
            <person name="Holden M.T.G."/>
            <person name="Pallen M.J."/>
            <person name="Bentley S.D."/>
            <person name="Besra G.S."/>
            <person name="Churcher C.M."/>
            <person name="James K.D."/>
            <person name="De Zoysa A."/>
            <person name="Chillingworth T."/>
            <person name="Cronin A."/>
            <person name="Dowd L."/>
            <person name="Feltwell T."/>
            <person name="Hamlin N."/>
            <person name="Holroyd S."/>
            <person name="Jagels K."/>
            <person name="Moule S."/>
            <person name="Quail M.A."/>
            <person name="Rabbinowitsch E."/>
            <person name="Rutherford K.M."/>
            <person name="Thomson N.R."/>
            <person name="Unwin L."/>
            <person name="Whitehead S."/>
            <person name="Barrell B.G."/>
            <person name="Parkhill J."/>
        </authorList>
    </citation>
    <scope>NUCLEOTIDE SEQUENCE [LARGE SCALE GENOMIC DNA]</scope>
    <source>
        <strain>ATCC 700971 / NCTC 13129 / Biotype gravis</strain>
    </source>
</reference>
<reference key="2">
    <citation type="journal article" date="1994" name="J. Clin. Microbiol.">
        <title>The superoxide dismutase gene, a target for detection and identification of mycobacteria by PCR.</title>
        <authorList>
            <person name="Zolg J.W."/>
            <person name="Philippi-Schulz S."/>
        </authorList>
    </citation>
    <scope>NUCLEOTIDE SEQUENCE [GENOMIC DNA] OF 26-189</scope>
    <source>
        <strain>ATCC 11913</strain>
    </source>
</reference>
<sequence>MTYALPELDYAYDALEPHIAAEIMELHHSKHHANYVNGANAALEKLQKARENGEIGAVVTALSKDLAFNLGGHTNHSIFWKNLSPNGGGEPTGALAEAIAKEFGSFEKFKDHFSAAALGLQGSGWAVLGYDHIGGRLVIEQLTDQQGNISANLTPLLMLDMWEHAFYLQYKNVKADYVKAVWNVFNWDDVAARFEAATK</sequence>
<keyword id="KW-0464">Manganese</keyword>
<keyword id="KW-0479">Metal-binding</keyword>
<keyword id="KW-0560">Oxidoreductase</keyword>
<keyword id="KW-1185">Reference proteome</keyword>
<name>SODM_CORDI</name>
<organism>
    <name type="scientific">Corynebacterium diphtheriae (strain ATCC 700971 / NCTC 13129 / Biotype gravis)</name>
    <dbReference type="NCBI Taxonomy" id="257309"/>
    <lineage>
        <taxon>Bacteria</taxon>
        <taxon>Bacillati</taxon>
        <taxon>Actinomycetota</taxon>
        <taxon>Actinomycetes</taxon>
        <taxon>Mycobacteriales</taxon>
        <taxon>Corynebacteriaceae</taxon>
        <taxon>Corynebacterium</taxon>
    </lineage>
</organism>
<protein>
    <recommendedName>
        <fullName>Superoxide dismutase [Mn]</fullName>
        <ecNumber>1.15.1.1</ecNumber>
    </recommendedName>
</protein>
<comment type="function">
    <text>Destroys superoxide anion radicals which are normally produced within the cells and which are toxic to biological systems.</text>
</comment>
<comment type="catalytic activity">
    <reaction>
        <text>2 superoxide + 2 H(+) = H2O2 + O2</text>
        <dbReference type="Rhea" id="RHEA:20696"/>
        <dbReference type="ChEBI" id="CHEBI:15378"/>
        <dbReference type="ChEBI" id="CHEBI:15379"/>
        <dbReference type="ChEBI" id="CHEBI:16240"/>
        <dbReference type="ChEBI" id="CHEBI:18421"/>
        <dbReference type="EC" id="1.15.1.1"/>
    </reaction>
</comment>
<comment type="cofactor">
    <cofactor evidence="1">
        <name>Mn(2+)</name>
        <dbReference type="ChEBI" id="CHEBI:29035"/>
    </cofactor>
    <text evidence="1">Binds 1 Mn(2+) ion per subunit.</text>
</comment>
<comment type="similarity">
    <text evidence="2">Belongs to the iron/manganese superoxide dismutase family.</text>
</comment>
<dbReference type="EC" id="1.15.1.1"/>
<dbReference type="EMBL" id="BX248360">
    <property type="protein sequence ID" value="CAE50785.1"/>
    <property type="molecule type" value="Genomic_DNA"/>
</dbReference>
<dbReference type="EMBL" id="X81382">
    <property type="protein sequence ID" value="CAA57145.1"/>
    <property type="molecule type" value="Genomic_DNA"/>
</dbReference>
<dbReference type="PIR" id="I40677">
    <property type="entry name" value="I40677"/>
</dbReference>
<dbReference type="RefSeq" id="WP_004567418.1">
    <property type="nucleotide sequence ID" value="NC_002935.2"/>
</dbReference>
<dbReference type="SMR" id="P42821"/>
<dbReference type="STRING" id="257309.DIP2261"/>
<dbReference type="KEGG" id="cdi:DIP2261"/>
<dbReference type="HOGENOM" id="CLU_031625_2_2_11"/>
<dbReference type="Proteomes" id="UP000002198">
    <property type="component" value="Chromosome"/>
</dbReference>
<dbReference type="GO" id="GO:0046872">
    <property type="term" value="F:metal ion binding"/>
    <property type="evidence" value="ECO:0007669"/>
    <property type="project" value="UniProtKB-KW"/>
</dbReference>
<dbReference type="GO" id="GO:0004784">
    <property type="term" value="F:superoxide dismutase activity"/>
    <property type="evidence" value="ECO:0007669"/>
    <property type="project" value="UniProtKB-EC"/>
</dbReference>
<dbReference type="FunFam" id="1.10.287.990:FF:000001">
    <property type="entry name" value="Superoxide dismutase"/>
    <property type="match status" value="1"/>
</dbReference>
<dbReference type="FunFam" id="3.55.40.20:FF:000004">
    <property type="entry name" value="Superoxide dismutase [Fe]"/>
    <property type="match status" value="1"/>
</dbReference>
<dbReference type="Gene3D" id="1.10.287.990">
    <property type="entry name" value="Fe,Mn superoxide dismutase (SOD) domain"/>
    <property type="match status" value="1"/>
</dbReference>
<dbReference type="Gene3D" id="3.55.40.20">
    <property type="entry name" value="Iron/manganese superoxide dismutase, C-terminal domain"/>
    <property type="match status" value="1"/>
</dbReference>
<dbReference type="InterPro" id="IPR050265">
    <property type="entry name" value="Fe/Mn_Superoxide_Dismutase"/>
</dbReference>
<dbReference type="InterPro" id="IPR001189">
    <property type="entry name" value="Mn/Fe_SOD"/>
</dbReference>
<dbReference type="InterPro" id="IPR019833">
    <property type="entry name" value="Mn/Fe_SOD_BS"/>
</dbReference>
<dbReference type="InterPro" id="IPR019832">
    <property type="entry name" value="Mn/Fe_SOD_C"/>
</dbReference>
<dbReference type="InterPro" id="IPR019831">
    <property type="entry name" value="Mn/Fe_SOD_N"/>
</dbReference>
<dbReference type="InterPro" id="IPR036324">
    <property type="entry name" value="Mn/Fe_SOD_N_sf"/>
</dbReference>
<dbReference type="InterPro" id="IPR036314">
    <property type="entry name" value="SOD_C_sf"/>
</dbReference>
<dbReference type="PANTHER" id="PTHR11404">
    <property type="entry name" value="SUPEROXIDE DISMUTASE 2"/>
    <property type="match status" value="1"/>
</dbReference>
<dbReference type="PANTHER" id="PTHR11404:SF6">
    <property type="entry name" value="SUPEROXIDE DISMUTASE [MN], MITOCHONDRIAL"/>
    <property type="match status" value="1"/>
</dbReference>
<dbReference type="Pfam" id="PF02777">
    <property type="entry name" value="Sod_Fe_C"/>
    <property type="match status" value="1"/>
</dbReference>
<dbReference type="Pfam" id="PF00081">
    <property type="entry name" value="Sod_Fe_N"/>
    <property type="match status" value="1"/>
</dbReference>
<dbReference type="PIRSF" id="PIRSF000349">
    <property type="entry name" value="SODismutase"/>
    <property type="match status" value="1"/>
</dbReference>
<dbReference type="PRINTS" id="PR01703">
    <property type="entry name" value="MNSODISMTASE"/>
</dbReference>
<dbReference type="SUPFAM" id="SSF54719">
    <property type="entry name" value="Fe,Mn superoxide dismutase (SOD), C-terminal domain"/>
    <property type="match status" value="1"/>
</dbReference>
<dbReference type="SUPFAM" id="SSF46609">
    <property type="entry name" value="Fe,Mn superoxide dismutase (SOD), N-terminal domain"/>
    <property type="match status" value="1"/>
</dbReference>
<dbReference type="PROSITE" id="PS00088">
    <property type="entry name" value="SOD_MN"/>
    <property type="match status" value="1"/>
</dbReference>
<evidence type="ECO:0000250" key="1"/>
<evidence type="ECO:0000305" key="2"/>
<feature type="chain" id="PRO_0000160028" description="Superoxide dismutase [Mn]">
    <location>
        <begin position="1"/>
        <end position="199"/>
    </location>
</feature>
<feature type="binding site" evidence="1">
    <location>
        <position position="27"/>
    </location>
    <ligand>
        <name>Mn(2+)</name>
        <dbReference type="ChEBI" id="CHEBI:29035"/>
    </ligand>
</feature>
<feature type="binding site" evidence="1">
    <location>
        <position position="76"/>
    </location>
    <ligand>
        <name>Mn(2+)</name>
        <dbReference type="ChEBI" id="CHEBI:29035"/>
    </ligand>
</feature>
<feature type="binding site" evidence="1">
    <location>
        <position position="160"/>
    </location>
    <ligand>
        <name>Mn(2+)</name>
        <dbReference type="ChEBI" id="CHEBI:29035"/>
    </ligand>
</feature>
<feature type="binding site" evidence="1">
    <location>
        <position position="164"/>
    </location>
    <ligand>
        <name>Mn(2+)</name>
        <dbReference type="ChEBI" id="CHEBI:29035"/>
    </ligand>
</feature>
<feature type="sequence conflict" description="In Ref. 2; CAA57145." evidence="2" ref="2">
    <original>A</original>
    <variation>T</variation>
    <location>
        <position position="41"/>
    </location>
</feature>
<feature type="sequence conflict" description="In Ref. 2." evidence="2" ref="2">
    <location>
        <begin position="123"/>
        <end position="124"/>
    </location>
</feature>
<feature type="sequence conflict" description="In Ref. 2; CAA57145." evidence="2" ref="2">
    <original>F</original>
    <variation>V</variation>
    <location>
        <position position="185"/>
    </location>
</feature>
<proteinExistence type="inferred from homology"/>
<gene>
    <name type="primary">sodA</name>
    <name type="synonym">sod</name>
    <name type="ordered locus">DIP2261</name>
</gene>
<accession>P42821</accession>